<keyword id="KW-1003">Cell membrane</keyword>
<keyword id="KW-0472">Membrane</keyword>
<keyword id="KW-0812">Transmembrane</keyword>
<keyword id="KW-1133">Transmembrane helix</keyword>
<proteinExistence type="inferred from homology"/>
<dbReference type="EMBL" id="BA000018">
    <property type="protein sequence ID" value="BAB42975.1"/>
    <property type="molecule type" value="Genomic_DNA"/>
</dbReference>
<dbReference type="RefSeq" id="WP_000999717.1">
    <property type="nucleotide sequence ID" value="NC_002745.2"/>
</dbReference>
<dbReference type="SMR" id="Q7A4R6"/>
<dbReference type="EnsemblBacteria" id="BAB42975">
    <property type="protein sequence ID" value="BAB42975"/>
    <property type="gene ID" value="BAB42975"/>
</dbReference>
<dbReference type="KEGG" id="sau:SA1705"/>
<dbReference type="HOGENOM" id="CLU_067028_0_0_9"/>
<dbReference type="GO" id="GO:0005886">
    <property type="term" value="C:plasma membrane"/>
    <property type="evidence" value="ECO:0007669"/>
    <property type="project" value="UniProtKB-SubCell"/>
</dbReference>
<dbReference type="InterPro" id="IPR010343">
    <property type="entry name" value="ArAE_1"/>
</dbReference>
<dbReference type="PANTHER" id="PTHR31086">
    <property type="entry name" value="ALUMINUM-ACTIVATED MALATE TRANSPORTER 10"/>
    <property type="match status" value="1"/>
</dbReference>
<dbReference type="Pfam" id="PF06081">
    <property type="entry name" value="ArAE_1"/>
    <property type="match status" value="1"/>
</dbReference>
<gene>
    <name type="ordered locus">SA1705</name>
</gene>
<organism>
    <name type="scientific">Staphylococcus aureus (strain N315)</name>
    <dbReference type="NCBI Taxonomy" id="158879"/>
    <lineage>
        <taxon>Bacteria</taxon>
        <taxon>Bacillati</taxon>
        <taxon>Bacillota</taxon>
        <taxon>Bacilli</taxon>
        <taxon>Bacillales</taxon>
        <taxon>Staphylococcaceae</taxon>
        <taxon>Staphylococcus</taxon>
    </lineage>
</organism>
<reference key="1">
    <citation type="journal article" date="2001" name="Lancet">
        <title>Whole genome sequencing of meticillin-resistant Staphylococcus aureus.</title>
        <authorList>
            <person name="Kuroda M."/>
            <person name="Ohta T."/>
            <person name="Uchiyama I."/>
            <person name="Baba T."/>
            <person name="Yuzawa H."/>
            <person name="Kobayashi I."/>
            <person name="Cui L."/>
            <person name="Oguchi A."/>
            <person name="Aoki K."/>
            <person name="Nagai Y."/>
            <person name="Lian J.-Q."/>
            <person name="Ito T."/>
            <person name="Kanamori M."/>
            <person name="Matsumaru H."/>
            <person name="Maruyama A."/>
            <person name="Murakami H."/>
            <person name="Hosoyama A."/>
            <person name="Mizutani-Ui Y."/>
            <person name="Takahashi N.K."/>
            <person name="Sawano T."/>
            <person name="Inoue R."/>
            <person name="Kaito C."/>
            <person name="Sekimizu K."/>
            <person name="Hirakawa H."/>
            <person name="Kuhara S."/>
            <person name="Goto S."/>
            <person name="Yabuzaki J."/>
            <person name="Kanehisa M."/>
            <person name="Yamashita A."/>
            <person name="Oshima K."/>
            <person name="Furuya K."/>
            <person name="Yoshino C."/>
            <person name="Shiba T."/>
            <person name="Hattori M."/>
            <person name="Ogasawara N."/>
            <person name="Hayashi H."/>
            <person name="Hiramatsu K."/>
        </authorList>
    </citation>
    <scope>NUCLEOTIDE SEQUENCE [LARGE SCALE GENOMIC DNA]</scope>
    <source>
        <strain>N315</strain>
    </source>
</reference>
<accession>Q7A4R6</accession>
<evidence type="ECO:0000255" key="1"/>
<evidence type="ECO:0000305" key="2"/>
<feature type="chain" id="PRO_0000283018" description="UPF0421 protein SA1705">
    <location>
        <begin position="1"/>
        <end position="328"/>
    </location>
</feature>
<feature type="transmembrane region" description="Helical" evidence="1">
    <location>
        <begin position="19"/>
        <end position="39"/>
    </location>
</feature>
<feature type="transmembrane region" description="Helical" evidence="1">
    <location>
        <begin position="61"/>
        <end position="81"/>
    </location>
</feature>
<feature type="transmembrane region" description="Helical" evidence="1">
    <location>
        <begin position="108"/>
        <end position="128"/>
    </location>
</feature>
<feature type="transmembrane region" description="Helical" evidence="1">
    <location>
        <begin position="132"/>
        <end position="152"/>
    </location>
</feature>
<protein>
    <recommendedName>
        <fullName>UPF0421 protein SA1705</fullName>
    </recommendedName>
</protein>
<name>Y1705_STAAN</name>
<comment type="subcellular location">
    <subcellularLocation>
        <location evidence="2">Cell membrane</location>
        <topology evidence="2">Multi-pass membrane protein</topology>
    </subcellularLocation>
</comment>
<comment type="similarity">
    <text evidence="2">Belongs to the UPF0421 family.</text>
</comment>
<sequence length="328" mass="37450">MNDQWYKHLIGARTIKTGIAIFLTAVFCMALDLTPIYAILTAVVTIEPTAKASLIKGYRRLPATVIGAGFAVLFTYLFGDQSPFTYALSATFTILFCTKLKLQVGTNVAVLTSLAMIPGIHDAYIFNFLSRTLTAIIGLVTSGLINFMVFPPKYYGQVEEKLSKTDALMYKLFYNRCQELILSRLQSDKSEKAYKNIFNLNNQVETLISYQRDELSYHKKKECDWKLLNQLTKRAYTNRLFITHLSNIIYLPKNTRVNFSGDEKMALLKISSSIKDIFYDGTFKREDDSVETLRSTIKALEISGENQIKSHILYEVLMIYRLLDSRYA</sequence>